<evidence type="ECO:0000255" key="1">
    <source>
        <dbReference type="HAMAP-Rule" id="MF_01341"/>
    </source>
</evidence>
<evidence type="ECO:0000256" key="2">
    <source>
        <dbReference type="SAM" id="MobiDB-lite"/>
    </source>
</evidence>
<evidence type="ECO:0000305" key="3"/>
<gene>
    <name evidence="1" type="primary">rplO</name>
    <name type="ordered locus">BL1599</name>
</gene>
<feature type="chain" id="PRO_0000104682" description="Large ribosomal subunit protein uL15">
    <location>
        <begin position="1"/>
        <end position="150"/>
    </location>
</feature>
<feature type="region of interest" description="Disordered" evidence="2">
    <location>
        <begin position="1"/>
        <end position="55"/>
    </location>
</feature>
<feature type="compositionally biased region" description="Basic and acidic residues" evidence="2">
    <location>
        <begin position="8"/>
        <end position="32"/>
    </location>
</feature>
<sequence>MADNEILQMHDLKPAPGAKKDRTRVGRGEGSKGKTSGRGAKGQTKRNHVRPGFEGGQLPLYMRLPKLRGFKNPFKVEFQVINIARLVELFPEGGEVAVADLIAKGAVRDNAPVKVLGDGETTVAFTLKGVKASASAKSKIEAAGGSVSED</sequence>
<accession>Q8G400</accession>
<comment type="function">
    <text evidence="1">Binds to the 23S rRNA.</text>
</comment>
<comment type="subunit">
    <text evidence="1">Part of the 50S ribosomal subunit.</text>
</comment>
<comment type="similarity">
    <text evidence="1">Belongs to the universal ribosomal protein uL15 family.</text>
</comment>
<proteinExistence type="inferred from homology"/>
<protein>
    <recommendedName>
        <fullName evidence="1">Large ribosomal subunit protein uL15</fullName>
    </recommendedName>
    <alternativeName>
        <fullName evidence="3">50S ribosomal protein L15</fullName>
    </alternativeName>
</protein>
<name>RL15_BIFLO</name>
<dbReference type="EMBL" id="AE014295">
    <property type="protein sequence ID" value="AAN25388.1"/>
    <property type="molecule type" value="Genomic_DNA"/>
</dbReference>
<dbReference type="RefSeq" id="NP_696752.1">
    <property type="nucleotide sequence ID" value="NC_004307.2"/>
</dbReference>
<dbReference type="RefSeq" id="WP_008783622.1">
    <property type="nucleotide sequence ID" value="NC_004307.2"/>
</dbReference>
<dbReference type="SMR" id="Q8G400"/>
<dbReference type="STRING" id="206672.BL1599"/>
<dbReference type="EnsemblBacteria" id="AAN25388">
    <property type="protein sequence ID" value="AAN25388"/>
    <property type="gene ID" value="BL1599"/>
</dbReference>
<dbReference type="GeneID" id="69578878"/>
<dbReference type="KEGG" id="blo:BL1599"/>
<dbReference type="PATRIC" id="fig|206672.9.peg.1654"/>
<dbReference type="HOGENOM" id="CLU_055188_4_1_11"/>
<dbReference type="OrthoDB" id="9810293at2"/>
<dbReference type="PhylomeDB" id="Q8G400"/>
<dbReference type="Proteomes" id="UP000000439">
    <property type="component" value="Chromosome"/>
</dbReference>
<dbReference type="GO" id="GO:0022625">
    <property type="term" value="C:cytosolic large ribosomal subunit"/>
    <property type="evidence" value="ECO:0007669"/>
    <property type="project" value="TreeGrafter"/>
</dbReference>
<dbReference type="GO" id="GO:0019843">
    <property type="term" value="F:rRNA binding"/>
    <property type="evidence" value="ECO:0007669"/>
    <property type="project" value="UniProtKB-UniRule"/>
</dbReference>
<dbReference type="GO" id="GO:0003735">
    <property type="term" value="F:structural constituent of ribosome"/>
    <property type="evidence" value="ECO:0007669"/>
    <property type="project" value="InterPro"/>
</dbReference>
<dbReference type="GO" id="GO:0006412">
    <property type="term" value="P:translation"/>
    <property type="evidence" value="ECO:0007669"/>
    <property type="project" value="UniProtKB-UniRule"/>
</dbReference>
<dbReference type="Gene3D" id="3.100.10.10">
    <property type="match status" value="1"/>
</dbReference>
<dbReference type="HAMAP" id="MF_01341">
    <property type="entry name" value="Ribosomal_uL15"/>
    <property type="match status" value="1"/>
</dbReference>
<dbReference type="InterPro" id="IPR030878">
    <property type="entry name" value="Ribosomal_uL15"/>
</dbReference>
<dbReference type="InterPro" id="IPR021131">
    <property type="entry name" value="Ribosomal_uL15/eL18"/>
</dbReference>
<dbReference type="InterPro" id="IPR036227">
    <property type="entry name" value="Ribosomal_uL15/eL18_sf"/>
</dbReference>
<dbReference type="InterPro" id="IPR005749">
    <property type="entry name" value="Ribosomal_uL15_bac-type"/>
</dbReference>
<dbReference type="NCBIfam" id="TIGR01071">
    <property type="entry name" value="rplO_bact"/>
    <property type="match status" value="1"/>
</dbReference>
<dbReference type="PANTHER" id="PTHR12934">
    <property type="entry name" value="50S RIBOSOMAL PROTEIN L15"/>
    <property type="match status" value="1"/>
</dbReference>
<dbReference type="PANTHER" id="PTHR12934:SF11">
    <property type="entry name" value="LARGE RIBOSOMAL SUBUNIT PROTEIN UL15M"/>
    <property type="match status" value="1"/>
</dbReference>
<dbReference type="Pfam" id="PF00828">
    <property type="entry name" value="Ribosomal_L27A"/>
    <property type="match status" value="1"/>
</dbReference>
<dbReference type="SUPFAM" id="SSF52080">
    <property type="entry name" value="Ribosomal proteins L15p and L18e"/>
    <property type="match status" value="1"/>
</dbReference>
<reference key="1">
    <citation type="journal article" date="2002" name="Proc. Natl. Acad. Sci. U.S.A.">
        <title>The genome sequence of Bifidobacterium longum reflects its adaptation to the human gastrointestinal tract.</title>
        <authorList>
            <person name="Schell M.A."/>
            <person name="Karmirantzou M."/>
            <person name="Snel B."/>
            <person name="Vilanova D."/>
            <person name="Berger B."/>
            <person name="Pessi G."/>
            <person name="Zwahlen M.-C."/>
            <person name="Desiere F."/>
            <person name="Bork P."/>
            <person name="Delley M."/>
            <person name="Pridmore R.D."/>
            <person name="Arigoni F."/>
        </authorList>
    </citation>
    <scope>NUCLEOTIDE SEQUENCE [LARGE SCALE GENOMIC DNA]</scope>
    <source>
        <strain>NCC 2705</strain>
    </source>
</reference>
<keyword id="KW-1185">Reference proteome</keyword>
<keyword id="KW-0687">Ribonucleoprotein</keyword>
<keyword id="KW-0689">Ribosomal protein</keyword>
<keyword id="KW-0694">RNA-binding</keyword>
<keyword id="KW-0699">rRNA-binding</keyword>
<organism>
    <name type="scientific">Bifidobacterium longum (strain NCC 2705)</name>
    <dbReference type="NCBI Taxonomy" id="206672"/>
    <lineage>
        <taxon>Bacteria</taxon>
        <taxon>Bacillati</taxon>
        <taxon>Actinomycetota</taxon>
        <taxon>Actinomycetes</taxon>
        <taxon>Bifidobacteriales</taxon>
        <taxon>Bifidobacteriaceae</taxon>
        <taxon>Bifidobacterium</taxon>
    </lineage>
</organism>